<feature type="propeptide" id="PRO_1000124577" evidence="1">
    <location>
        <begin position="1"/>
        <end position="8"/>
    </location>
</feature>
<feature type="chain" id="PRO_1000124578" description="Photosystem II reaction center protein K" evidence="1">
    <location>
        <begin position="9"/>
        <end position="45"/>
    </location>
</feature>
<feature type="transmembrane region" description="Helical" evidence="1">
    <location>
        <begin position="24"/>
        <end position="44"/>
    </location>
</feature>
<organism>
    <name type="scientific">Picosynechococcus sp. (strain ATCC 27264 / PCC 7002 / PR-6)</name>
    <name type="common">Agmenellum quadruplicatum</name>
    <dbReference type="NCBI Taxonomy" id="32049"/>
    <lineage>
        <taxon>Bacteria</taxon>
        <taxon>Bacillati</taxon>
        <taxon>Cyanobacteriota</taxon>
        <taxon>Cyanophyceae</taxon>
        <taxon>Oscillatoriophycideae</taxon>
        <taxon>Chroococcales</taxon>
        <taxon>Geminocystaceae</taxon>
        <taxon>Picosynechococcus</taxon>
    </lineage>
</organism>
<sequence length="45" mass="5005">MEAALLLAKLPEAYSIFDPLVDVLPLIPLFFLLLAFVWQAAVGFK</sequence>
<reference key="1">
    <citation type="submission" date="2008-02" db="EMBL/GenBank/DDBJ databases">
        <title>Complete sequence of Synechococcus sp. PCC 7002.</title>
        <authorList>
            <person name="Li T."/>
            <person name="Zhao J."/>
            <person name="Zhao C."/>
            <person name="Liu Z."/>
            <person name="Zhao F."/>
            <person name="Marquardt J."/>
            <person name="Nomura C.T."/>
            <person name="Persson S."/>
            <person name="Detter J.C."/>
            <person name="Richardson P.M."/>
            <person name="Lanz C."/>
            <person name="Schuster S.C."/>
            <person name="Wang J."/>
            <person name="Li S."/>
            <person name="Huang X."/>
            <person name="Cai T."/>
            <person name="Yu Z."/>
            <person name="Luo J."/>
            <person name="Zhao J."/>
            <person name="Bryant D.A."/>
        </authorList>
    </citation>
    <scope>NUCLEOTIDE SEQUENCE [LARGE SCALE GENOMIC DNA]</scope>
    <source>
        <strain>ATCC 27264 / PCC 7002 / PR-6</strain>
    </source>
</reference>
<keyword id="KW-0472">Membrane</keyword>
<keyword id="KW-0602">Photosynthesis</keyword>
<keyword id="KW-0604">Photosystem II</keyword>
<keyword id="KW-0674">Reaction center</keyword>
<keyword id="KW-1185">Reference proteome</keyword>
<keyword id="KW-0793">Thylakoid</keyword>
<keyword id="KW-0812">Transmembrane</keyword>
<keyword id="KW-1133">Transmembrane helix</keyword>
<accession>B1XMN4</accession>
<gene>
    <name evidence="1" type="primary">psbK</name>
    <name type="ordered locus">SYNPCC7002_A2779</name>
</gene>
<name>PSBK_PICP2</name>
<protein>
    <recommendedName>
        <fullName evidence="1">Photosystem II reaction center protein K</fullName>
        <shortName evidence="1">PSII-K</shortName>
    </recommendedName>
</protein>
<dbReference type="EMBL" id="CP000951">
    <property type="protein sequence ID" value="ACB00753.1"/>
    <property type="molecule type" value="Genomic_DNA"/>
</dbReference>
<dbReference type="RefSeq" id="WP_012308371.1">
    <property type="nucleotide sequence ID" value="NZ_JAHHPU010000003.1"/>
</dbReference>
<dbReference type="SMR" id="B1XMN4"/>
<dbReference type="STRING" id="32049.SYNPCC7002_A2779"/>
<dbReference type="KEGG" id="syp:SYNPCC7002_A2779"/>
<dbReference type="eggNOG" id="ENOG5032YQR">
    <property type="taxonomic scope" value="Bacteria"/>
</dbReference>
<dbReference type="HOGENOM" id="CLU_174355_0_0_3"/>
<dbReference type="Proteomes" id="UP000001688">
    <property type="component" value="Chromosome"/>
</dbReference>
<dbReference type="GO" id="GO:0009539">
    <property type="term" value="C:photosystem II reaction center"/>
    <property type="evidence" value="ECO:0007669"/>
    <property type="project" value="InterPro"/>
</dbReference>
<dbReference type="GO" id="GO:0031676">
    <property type="term" value="C:plasma membrane-derived thylakoid membrane"/>
    <property type="evidence" value="ECO:0007669"/>
    <property type="project" value="UniProtKB-SubCell"/>
</dbReference>
<dbReference type="GO" id="GO:0015979">
    <property type="term" value="P:photosynthesis"/>
    <property type="evidence" value="ECO:0007669"/>
    <property type="project" value="UniProtKB-UniRule"/>
</dbReference>
<dbReference type="HAMAP" id="MF_00441">
    <property type="entry name" value="PSII_PsbK"/>
    <property type="match status" value="1"/>
</dbReference>
<dbReference type="InterPro" id="IPR003687">
    <property type="entry name" value="PSII_PsbK"/>
</dbReference>
<dbReference type="InterPro" id="IPR037270">
    <property type="entry name" value="PSII_PsbK_sf"/>
</dbReference>
<dbReference type="NCBIfam" id="NF002715">
    <property type="entry name" value="PRK02553.1"/>
    <property type="match status" value="1"/>
</dbReference>
<dbReference type="PANTHER" id="PTHR35325">
    <property type="match status" value="1"/>
</dbReference>
<dbReference type="PANTHER" id="PTHR35325:SF1">
    <property type="entry name" value="PHOTOSYSTEM II REACTION CENTER PROTEIN K"/>
    <property type="match status" value="1"/>
</dbReference>
<dbReference type="Pfam" id="PF02533">
    <property type="entry name" value="PsbK"/>
    <property type="match status" value="1"/>
</dbReference>
<dbReference type="SUPFAM" id="SSF161037">
    <property type="entry name" value="Photosystem II reaction center protein K, PsbK"/>
    <property type="match status" value="1"/>
</dbReference>
<comment type="function">
    <text evidence="1">One of the components of the core complex of photosystem II (PSII). PSII is a light-driven water:plastoquinone oxidoreductase that uses light energy to abstract electrons from H(2)O, generating O(2) and a proton gradient subsequently used for ATP formation. It consists of a core antenna complex that captures photons, and an electron transfer chain that converts photonic excitation into a charge separation.</text>
</comment>
<comment type="subunit">
    <text evidence="1">PSII is composed of 1 copy each of membrane proteins PsbA, PsbB, PsbC, PsbD, PsbE, PsbF, PsbH, PsbI, PsbJ, PsbK, PsbL, PsbM, PsbT, PsbX, PsbY, PsbZ, Psb30/Ycf12, peripheral proteins PsbO, CyanoQ (PsbQ), PsbU, PsbV and a large number of cofactors. It forms dimeric complexes.</text>
</comment>
<comment type="subcellular location">
    <subcellularLocation>
        <location evidence="1">Cellular thylakoid membrane</location>
        <topology evidence="1">Single-pass membrane protein</topology>
    </subcellularLocation>
</comment>
<comment type="similarity">
    <text evidence="1">Belongs to the PsbK family.</text>
</comment>
<proteinExistence type="inferred from homology"/>
<evidence type="ECO:0000255" key="1">
    <source>
        <dbReference type="HAMAP-Rule" id="MF_00441"/>
    </source>
</evidence>